<protein>
    <recommendedName>
        <fullName>Probable quinol oxidase subunit 4</fullName>
        <ecNumber>1.10.3.-</ecNumber>
    </recommendedName>
    <alternativeName>
        <fullName>Quinol oxidase polypeptide IV</fullName>
    </alternativeName>
</protein>
<comment type="function">
    <text evidence="1">Catalyzes quinol oxidation with the concomitant reduction of oxygen to water.</text>
</comment>
<comment type="catalytic activity">
    <reaction>
        <text>2 a quinol + O2 = 2 a quinone + 2 H2O</text>
        <dbReference type="Rhea" id="RHEA:55376"/>
        <dbReference type="ChEBI" id="CHEBI:15377"/>
        <dbReference type="ChEBI" id="CHEBI:15379"/>
        <dbReference type="ChEBI" id="CHEBI:24646"/>
        <dbReference type="ChEBI" id="CHEBI:132124"/>
    </reaction>
</comment>
<comment type="subcellular location">
    <subcellularLocation>
        <location evidence="1">Cell membrane</location>
        <topology evidence="1">Multi-pass membrane protein</topology>
    </subcellularLocation>
</comment>
<comment type="similarity">
    <text evidence="3">Belongs to the cytochrome c oxidase bacterial subunit 4 family.</text>
</comment>
<gene>
    <name type="primary">qoxD</name>
    <name type="ordered locus">SA0910</name>
</gene>
<feature type="chain" id="PRO_0000275863" description="Probable quinol oxidase subunit 4">
    <location>
        <begin position="1"/>
        <end position="96"/>
    </location>
</feature>
<feature type="transmembrane region" description="Helical" evidence="2">
    <location>
        <begin position="8"/>
        <end position="28"/>
    </location>
</feature>
<feature type="transmembrane region" description="Helical" evidence="2">
    <location>
        <begin position="36"/>
        <end position="56"/>
    </location>
</feature>
<feature type="transmembrane region" description="Helical" evidence="2">
    <location>
        <begin position="68"/>
        <end position="88"/>
    </location>
</feature>
<proteinExistence type="inferred from homology"/>
<evidence type="ECO:0000250" key="1"/>
<evidence type="ECO:0000255" key="2"/>
<evidence type="ECO:0000305" key="3"/>
<sequence>MSTIMKHTVGFIASIVLTLLAVYVTLYTSLTFHAKLTIIFGFAFVQAGLQLLMFMHLTEGKDGRLQTFKVIFALVITLCFVVGTYWVMQGGHSSHL</sequence>
<accession>Q7A6A1</accession>
<name>QOX4_STAAN</name>
<keyword id="KW-1003">Cell membrane</keyword>
<keyword id="KW-0472">Membrane</keyword>
<keyword id="KW-0560">Oxidoreductase</keyword>
<keyword id="KW-0812">Transmembrane</keyword>
<keyword id="KW-1133">Transmembrane helix</keyword>
<reference key="1">
    <citation type="journal article" date="2001" name="Lancet">
        <title>Whole genome sequencing of meticillin-resistant Staphylococcus aureus.</title>
        <authorList>
            <person name="Kuroda M."/>
            <person name="Ohta T."/>
            <person name="Uchiyama I."/>
            <person name="Baba T."/>
            <person name="Yuzawa H."/>
            <person name="Kobayashi I."/>
            <person name="Cui L."/>
            <person name="Oguchi A."/>
            <person name="Aoki K."/>
            <person name="Nagai Y."/>
            <person name="Lian J.-Q."/>
            <person name="Ito T."/>
            <person name="Kanamori M."/>
            <person name="Matsumaru H."/>
            <person name="Maruyama A."/>
            <person name="Murakami H."/>
            <person name="Hosoyama A."/>
            <person name="Mizutani-Ui Y."/>
            <person name="Takahashi N.K."/>
            <person name="Sawano T."/>
            <person name="Inoue R."/>
            <person name="Kaito C."/>
            <person name="Sekimizu K."/>
            <person name="Hirakawa H."/>
            <person name="Kuhara S."/>
            <person name="Goto S."/>
            <person name="Yabuzaki J."/>
            <person name="Kanehisa M."/>
            <person name="Yamashita A."/>
            <person name="Oshima K."/>
            <person name="Furuya K."/>
            <person name="Yoshino C."/>
            <person name="Shiba T."/>
            <person name="Hattori M."/>
            <person name="Ogasawara N."/>
            <person name="Hayashi H."/>
            <person name="Hiramatsu K."/>
        </authorList>
    </citation>
    <scope>NUCLEOTIDE SEQUENCE [LARGE SCALE GENOMIC DNA]</scope>
    <source>
        <strain>N315</strain>
    </source>
</reference>
<dbReference type="EC" id="1.10.3.-"/>
<dbReference type="EMBL" id="BA000018">
    <property type="protein sequence ID" value="BAB42155.1"/>
    <property type="molecule type" value="Genomic_DNA"/>
</dbReference>
<dbReference type="PIR" id="H89874">
    <property type="entry name" value="H89874"/>
</dbReference>
<dbReference type="SMR" id="Q7A6A1"/>
<dbReference type="EnsemblBacteria" id="BAB42155">
    <property type="protein sequence ID" value="BAB42155"/>
    <property type="gene ID" value="BAB42155"/>
</dbReference>
<dbReference type="KEGG" id="sau:SA0910"/>
<dbReference type="HOGENOM" id="CLU_140945_2_0_9"/>
<dbReference type="GO" id="GO:0009319">
    <property type="term" value="C:cytochrome o ubiquinol oxidase complex"/>
    <property type="evidence" value="ECO:0007669"/>
    <property type="project" value="TreeGrafter"/>
</dbReference>
<dbReference type="GO" id="GO:0005886">
    <property type="term" value="C:plasma membrane"/>
    <property type="evidence" value="ECO:0007669"/>
    <property type="project" value="UniProtKB-SubCell"/>
</dbReference>
<dbReference type="GO" id="GO:0009486">
    <property type="term" value="F:cytochrome bo3 ubiquinol oxidase activity"/>
    <property type="evidence" value="ECO:0007669"/>
    <property type="project" value="TreeGrafter"/>
</dbReference>
<dbReference type="GO" id="GO:0016682">
    <property type="term" value="F:oxidoreductase activity, acting on diphenols and related substances as donors, oxygen as acceptor"/>
    <property type="evidence" value="ECO:0007669"/>
    <property type="project" value="InterPro"/>
</dbReference>
<dbReference type="GO" id="GO:0015078">
    <property type="term" value="F:proton transmembrane transporter activity"/>
    <property type="evidence" value="ECO:0007669"/>
    <property type="project" value="TreeGrafter"/>
</dbReference>
<dbReference type="GO" id="GO:0019646">
    <property type="term" value="P:aerobic electron transport chain"/>
    <property type="evidence" value="ECO:0007669"/>
    <property type="project" value="TreeGrafter"/>
</dbReference>
<dbReference type="GO" id="GO:0042773">
    <property type="term" value="P:ATP synthesis coupled electron transport"/>
    <property type="evidence" value="ECO:0007669"/>
    <property type="project" value="InterPro"/>
</dbReference>
<dbReference type="GO" id="GO:0015990">
    <property type="term" value="P:electron transport coupled proton transport"/>
    <property type="evidence" value="ECO:0007669"/>
    <property type="project" value="TreeGrafter"/>
</dbReference>
<dbReference type="InterPro" id="IPR005171">
    <property type="entry name" value="Cyt_c_oxidase_su4_prok"/>
</dbReference>
<dbReference type="InterPro" id="IPR050968">
    <property type="entry name" value="Cytochrome_c_oxidase_bac_sub4"/>
</dbReference>
<dbReference type="InterPro" id="IPR014250">
    <property type="entry name" value="QoxD"/>
</dbReference>
<dbReference type="NCBIfam" id="TIGR02901">
    <property type="entry name" value="QoxD"/>
    <property type="match status" value="1"/>
</dbReference>
<dbReference type="PANTHER" id="PTHR36835">
    <property type="entry name" value="CYTOCHROME BO(3) UBIQUINOL OXIDASE SUBUNIT 4"/>
    <property type="match status" value="1"/>
</dbReference>
<dbReference type="PANTHER" id="PTHR36835:SF1">
    <property type="entry name" value="CYTOCHROME BO(3) UBIQUINOL OXIDASE SUBUNIT 4"/>
    <property type="match status" value="1"/>
</dbReference>
<dbReference type="Pfam" id="PF03626">
    <property type="entry name" value="COX4_pro"/>
    <property type="match status" value="1"/>
</dbReference>
<organism>
    <name type="scientific">Staphylococcus aureus (strain N315)</name>
    <dbReference type="NCBI Taxonomy" id="158879"/>
    <lineage>
        <taxon>Bacteria</taxon>
        <taxon>Bacillati</taxon>
        <taxon>Bacillota</taxon>
        <taxon>Bacilli</taxon>
        <taxon>Bacillales</taxon>
        <taxon>Staphylococcaceae</taxon>
        <taxon>Staphylococcus</taxon>
    </lineage>
</organism>